<protein>
    <recommendedName>
        <fullName evidence="1">Elongation factor 4</fullName>
        <shortName evidence="1">EF-4</shortName>
        <ecNumber evidence="1">3.6.5.n1</ecNumber>
    </recommendedName>
    <alternativeName>
        <fullName evidence="1">Ribosomal back-translocase LepA</fullName>
    </alternativeName>
</protein>
<proteinExistence type="inferred from homology"/>
<gene>
    <name evidence="1" type="primary">lepA</name>
    <name type="ordered locus">STY2829</name>
    <name type="ordered locus">t0274</name>
</gene>
<dbReference type="EC" id="3.6.5.n1" evidence="1"/>
<dbReference type="EMBL" id="AL513382">
    <property type="protein sequence ID" value="CAD02785.1"/>
    <property type="molecule type" value="Genomic_DNA"/>
</dbReference>
<dbReference type="EMBL" id="AE014613">
    <property type="protein sequence ID" value="AAO67999.1"/>
    <property type="molecule type" value="Genomic_DNA"/>
</dbReference>
<dbReference type="RefSeq" id="NP_457112.1">
    <property type="nucleotide sequence ID" value="NC_003198.1"/>
</dbReference>
<dbReference type="RefSeq" id="WP_000790154.1">
    <property type="nucleotide sequence ID" value="NZ_WSUR01000007.1"/>
</dbReference>
<dbReference type="SMR" id="P0A1W5"/>
<dbReference type="STRING" id="220341.gene:17586719"/>
<dbReference type="KEGG" id="stt:t0274"/>
<dbReference type="KEGG" id="sty:STY2829"/>
<dbReference type="PATRIC" id="fig|220341.7.peg.2877"/>
<dbReference type="eggNOG" id="COG0481">
    <property type="taxonomic scope" value="Bacteria"/>
</dbReference>
<dbReference type="HOGENOM" id="CLU_009995_3_3_6"/>
<dbReference type="OMA" id="QVKCDEN"/>
<dbReference type="OrthoDB" id="9804431at2"/>
<dbReference type="Proteomes" id="UP000000541">
    <property type="component" value="Chromosome"/>
</dbReference>
<dbReference type="Proteomes" id="UP000002670">
    <property type="component" value="Chromosome"/>
</dbReference>
<dbReference type="GO" id="GO:0005886">
    <property type="term" value="C:plasma membrane"/>
    <property type="evidence" value="ECO:0007669"/>
    <property type="project" value="UniProtKB-SubCell"/>
</dbReference>
<dbReference type="GO" id="GO:0005525">
    <property type="term" value="F:GTP binding"/>
    <property type="evidence" value="ECO:0007669"/>
    <property type="project" value="UniProtKB-UniRule"/>
</dbReference>
<dbReference type="GO" id="GO:0003924">
    <property type="term" value="F:GTPase activity"/>
    <property type="evidence" value="ECO:0007669"/>
    <property type="project" value="UniProtKB-UniRule"/>
</dbReference>
<dbReference type="GO" id="GO:0097216">
    <property type="term" value="F:guanosine tetraphosphate binding"/>
    <property type="evidence" value="ECO:0007669"/>
    <property type="project" value="UniProtKB-ARBA"/>
</dbReference>
<dbReference type="GO" id="GO:0043022">
    <property type="term" value="F:ribosome binding"/>
    <property type="evidence" value="ECO:0007669"/>
    <property type="project" value="UniProtKB-UniRule"/>
</dbReference>
<dbReference type="GO" id="GO:0003746">
    <property type="term" value="F:translation elongation factor activity"/>
    <property type="evidence" value="ECO:0007669"/>
    <property type="project" value="UniProtKB-UniRule"/>
</dbReference>
<dbReference type="GO" id="GO:0045727">
    <property type="term" value="P:positive regulation of translation"/>
    <property type="evidence" value="ECO:0007669"/>
    <property type="project" value="UniProtKB-UniRule"/>
</dbReference>
<dbReference type="CDD" id="cd03699">
    <property type="entry name" value="EF4_II"/>
    <property type="match status" value="1"/>
</dbReference>
<dbReference type="CDD" id="cd16260">
    <property type="entry name" value="EF4_III"/>
    <property type="match status" value="1"/>
</dbReference>
<dbReference type="CDD" id="cd01890">
    <property type="entry name" value="LepA"/>
    <property type="match status" value="1"/>
</dbReference>
<dbReference type="CDD" id="cd03709">
    <property type="entry name" value="lepA_C"/>
    <property type="match status" value="1"/>
</dbReference>
<dbReference type="FunFam" id="3.30.70.240:FF:000005">
    <property type="entry name" value="Elongation factor 4"/>
    <property type="match status" value="1"/>
</dbReference>
<dbReference type="FunFam" id="3.40.50.300:FF:000078">
    <property type="entry name" value="Elongation factor 4"/>
    <property type="match status" value="1"/>
</dbReference>
<dbReference type="FunFam" id="2.40.30.10:FF:000015">
    <property type="entry name" value="Translation factor GUF1, mitochondrial"/>
    <property type="match status" value="1"/>
</dbReference>
<dbReference type="FunFam" id="3.30.70.2570:FF:000001">
    <property type="entry name" value="Translation factor GUF1, mitochondrial"/>
    <property type="match status" value="1"/>
</dbReference>
<dbReference type="FunFam" id="3.30.70.870:FF:000004">
    <property type="entry name" value="Translation factor GUF1, mitochondrial"/>
    <property type="match status" value="1"/>
</dbReference>
<dbReference type="Gene3D" id="3.30.70.240">
    <property type="match status" value="1"/>
</dbReference>
<dbReference type="Gene3D" id="3.30.70.2570">
    <property type="entry name" value="Elongation factor 4, C-terminal domain"/>
    <property type="match status" value="1"/>
</dbReference>
<dbReference type="Gene3D" id="3.30.70.870">
    <property type="entry name" value="Elongation Factor G (Translational Gtpase), domain 3"/>
    <property type="match status" value="1"/>
</dbReference>
<dbReference type="Gene3D" id="3.40.50.300">
    <property type="entry name" value="P-loop containing nucleotide triphosphate hydrolases"/>
    <property type="match status" value="1"/>
</dbReference>
<dbReference type="Gene3D" id="2.40.30.10">
    <property type="entry name" value="Translation factors"/>
    <property type="match status" value="1"/>
</dbReference>
<dbReference type="HAMAP" id="MF_00071">
    <property type="entry name" value="LepA"/>
    <property type="match status" value="1"/>
</dbReference>
<dbReference type="InterPro" id="IPR006297">
    <property type="entry name" value="EF-4"/>
</dbReference>
<dbReference type="InterPro" id="IPR035647">
    <property type="entry name" value="EFG_III/V"/>
</dbReference>
<dbReference type="InterPro" id="IPR000640">
    <property type="entry name" value="EFG_V-like"/>
</dbReference>
<dbReference type="InterPro" id="IPR004161">
    <property type="entry name" value="EFTu-like_2"/>
</dbReference>
<dbReference type="InterPro" id="IPR031157">
    <property type="entry name" value="G_TR_CS"/>
</dbReference>
<dbReference type="InterPro" id="IPR038363">
    <property type="entry name" value="LepA_C_sf"/>
</dbReference>
<dbReference type="InterPro" id="IPR013842">
    <property type="entry name" value="LepA_CTD"/>
</dbReference>
<dbReference type="InterPro" id="IPR035654">
    <property type="entry name" value="LepA_IV"/>
</dbReference>
<dbReference type="InterPro" id="IPR027417">
    <property type="entry name" value="P-loop_NTPase"/>
</dbReference>
<dbReference type="InterPro" id="IPR005225">
    <property type="entry name" value="Small_GTP-bd"/>
</dbReference>
<dbReference type="InterPro" id="IPR000795">
    <property type="entry name" value="T_Tr_GTP-bd_dom"/>
</dbReference>
<dbReference type="NCBIfam" id="TIGR01393">
    <property type="entry name" value="lepA"/>
    <property type="match status" value="1"/>
</dbReference>
<dbReference type="NCBIfam" id="TIGR00231">
    <property type="entry name" value="small_GTP"/>
    <property type="match status" value="1"/>
</dbReference>
<dbReference type="PANTHER" id="PTHR43512:SF4">
    <property type="entry name" value="TRANSLATION FACTOR GUF1 HOMOLOG, CHLOROPLASTIC"/>
    <property type="match status" value="1"/>
</dbReference>
<dbReference type="PANTHER" id="PTHR43512">
    <property type="entry name" value="TRANSLATION FACTOR GUF1-RELATED"/>
    <property type="match status" value="1"/>
</dbReference>
<dbReference type="Pfam" id="PF00679">
    <property type="entry name" value="EFG_C"/>
    <property type="match status" value="1"/>
</dbReference>
<dbReference type="Pfam" id="PF00009">
    <property type="entry name" value="GTP_EFTU"/>
    <property type="match status" value="1"/>
</dbReference>
<dbReference type="Pfam" id="PF03144">
    <property type="entry name" value="GTP_EFTU_D2"/>
    <property type="match status" value="1"/>
</dbReference>
<dbReference type="Pfam" id="PF06421">
    <property type="entry name" value="LepA_C"/>
    <property type="match status" value="1"/>
</dbReference>
<dbReference type="PRINTS" id="PR00315">
    <property type="entry name" value="ELONGATNFCT"/>
</dbReference>
<dbReference type="SUPFAM" id="SSF54980">
    <property type="entry name" value="EF-G C-terminal domain-like"/>
    <property type="match status" value="2"/>
</dbReference>
<dbReference type="SUPFAM" id="SSF52540">
    <property type="entry name" value="P-loop containing nucleoside triphosphate hydrolases"/>
    <property type="match status" value="1"/>
</dbReference>
<dbReference type="PROSITE" id="PS00301">
    <property type="entry name" value="G_TR_1"/>
    <property type="match status" value="1"/>
</dbReference>
<dbReference type="PROSITE" id="PS51722">
    <property type="entry name" value="G_TR_2"/>
    <property type="match status" value="1"/>
</dbReference>
<organism>
    <name type="scientific">Salmonella typhi</name>
    <dbReference type="NCBI Taxonomy" id="90370"/>
    <lineage>
        <taxon>Bacteria</taxon>
        <taxon>Pseudomonadati</taxon>
        <taxon>Pseudomonadota</taxon>
        <taxon>Gammaproteobacteria</taxon>
        <taxon>Enterobacterales</taxon>
        <taxon>Enterobacteriaceae</taxon>
        <taxon>Salmonella</taxon>
    </lineage>
</organism>
<keyword id="KW-0997">Cell inner membrane</keyword>
<keyword id="KW-1003">Cell membrane</keyword>
<keyword id="KW-0342">GTP-binding</keyword>
<keyword id="KW-0378">Hydrolase</keyword>
<keyword id="KW-0472">Membrane</keyword>
<keyword id="KW-0547">Nucleotide-binding</keyword>
<keyword id="KW-0648">Protein biosynthesis</keyword>
<feature type="chain" id="PRO_0000176336" description="Elongation factor 4">
    <location>
        <begin position="1"/>
        <end position="599"/>
    </location>
</feature>
<feature type="domain" description="tr-type G">
    <location>
        <begin position="2"/>
        <end position="184"/>
    </location>
</feature>
<feature type="binding site" evidence="1">
    <location>
        <begin position="14"/>
        <end position="19"/>
    </location>
    <ligand>
        <name>GTP</name>
        <dbReference type="ChEBI" id="CHEBI:37565"/>
    </ligand>
</feature>
<feature type="binding site" evidence="1">
    <location>
        <begin position="131"/>
        <end position="134"/>
    </location>
    <ligand>
        <name>GTP</name>
        <dbReference type="ChEBI" id="CHEBI:37565"/>
    </ligand>
</feature>
<evidence type="ECO:0000255" key="1">
    <source>
        <dbReference type="HAMAP-Rule" id="MF_00071"/>
    </source>
</evidence>
<reference key="1">
    <citation type="journal article" date="2001" name="Nature">
        <title>Complete genome sequence of a multiple drug resistant Salmonella enterica serovar Typhi CT18.</title>
        <authorList>
            <person name="Parkhill J."/>
            <person name="Dougan G."/>
            <person name="James K.D."/>
            <person name="Thomson N.R."/>
            <person name="Pickard D."/>
            <person name="Wain J."/>
            <person name="Churcher C.M."/>
            <person name="Mungall K.L."/>
            <person name="Bentley S.D."/>
            <person name="Holden M.T.G."/>
            <person name="Sebaihia M."/>
            <person name="Baker S."/>
            <person name="Basham D."/>
            <person name="Brooks K."/>
            <person name="Chillingworth T."/>
            <person name="Connerton P."/>
            <person name="Cronin A."/>
            <person name="Davis P."/>
            <person name="Davies R.M."/>
            <person name="Dowd L."/>
            <person name="White N."/>
            <person name="Farrar J."/>
            <person name="Feltwell T."/>
            <person name="Hamlin N."/>
            <person name="Haque A."/>
            <person name="Hien T.T."/>
            <person name="Holroyd S."/>
            <person name="Jagels K."/>
            <person name="Krogh A."/>
            <person name="Larsen T.S."/>
            <person name="Leather S."/>
            <person name="Moule S."/>
            <person name="O'Gaora P."/>
            <person name="Parry C."/>
            <person name="Quail M.A."/>
            <person name="Rutherford K.M."/>
            <person name="Simmonds M."/>
            <person name="Skelton J."/>
            <person name="Stevens K."/>
            <person name="Whitehead S."/>
            <person name="Barrell B.G."/>
        </authorList>
    </citation>
    <scope>NUCLEOTIDE SEQUENCE [LARGE SCALE GENOMIC DNA]</scope>
    <source>
        <strain>CT18</strain>
    </source>
</reference>
<reference key="2">
    <citation type="journal article" date="2003" name="J. Bacteriol.">
        <title>Comparative genomics of Salmonella enterica serovar Typhi strains Ty2 and CT18.</title>
        <authorList>
            <person name="Deng W."/>
            <person name="Liou S.-R."/>
            <person name="Plunkett G. III"/>
            <person name="Mayhew G.F."/>
            <person name="Rose D.J."/>
            <person name="Burland V."/>
            <person name="Kodoyianni V."/>
            <person name="Schwartz D.C."/>
            <person name="Blattner F.R."/>
        </authorList>
    </citation>
    <scope>NUCLEOTIDE SEQUENCE [LARGE SCALE GENOMIC DNA]</scope>
    <source>
        <strain>ATCC 700931 / Ty2</strain>
    </source>
</reference>
<accession>P0A1W5</accession>
<accession>P23698</accession>
<name>LEPA_SALTI</name>
<sequence>MKNIRNFSIIAHIDHGKSTLSDRIIQICGGLSDREMEAQVLDSMDLERERGITIKAQSVTLDFKASDGETYQLNFIDTPGHVDFSYEVSRSLAACEGALLVVDAGQGVEAQTLANCYTAMEMDLEVVPVLNKIDLPAADPERVAEEIEDIVGIDATDAVRCSAKTGVGVTDVLERLVRDIPPPQGDPDGPLQALIIDSWFDNYLGVVSLVRIKNGTMRKGDKIKVMSTGQTYNADRLGIFTPKQVDRTELKCGEVGWLVCAIKDILGAPVGDTLTSARNPAEKALPGFKKVKPQVYAGLFPVSSDDYESFRDALGKLSLNDASLFYEPESSSALGFGFRCGFLGLLHMEIIQERLEREYDLDLITTAPTVVYEVETTAKETIYVDSPSKLPPLNNIYELREPIAECHMLLPQAYLGNVITLCIEKRGVQTNMVYHGNQVALTYEIPMAEVVLDFFDRLKSTSRGYASLDYNFKRFQASDMVRVDVLINNERVDALALITHRDNSQSRGRELVEKMKDLIPRQQFDIAIQAAIGTHIIARSTVKQLRKNVLAKCYGGDISRKKKLLQKQKEGKKRMKQIGNVELPQEAFLAILHVGKDNK</sequence>
<comment type="function">
    <text evidence="1">Required for accurate and efficient protein synthesis under certain stress conditions. May act as a fidelity factor of the translation reaction, by catalyzing a one-codon backward translocation of tRNAs on improperly translocated ribosomes. Back-translocation proceeds from a post-translocation (POST) complex to a pre-translocation (PRE) complex, thus giving elongation factor G a second chance to translocate the tRNAs correctly. Binds to ribosomes in a GTP-dependent manner.</text>
</comment>
<comment type="catalytic activity">
    <reaction evidence="1">
        <text>GTP + H2O = GDP + phosphate + H(+)</text>
        <dbReference type="Rhea" id="RHEA:19669"/>
        <dbReference type="ChEBI" id="CHEBI:15377"/>
        <dbReference type="ChEBI" id="CHEBI:15378"/>
        <dbReference type="ChEBI" id="CHEBI:37565"/>
        <dbReference type="ChEBI" id="CHEBI:43474"/>
        <dbReference type="ChEBI" id="CHEBI:58189"/>
        <dbReference type="EC" id="3.6.5.n1"/>
    </reaction>
</comment>
<comment type="subcellular location">
    <subcellularLocation>
        <location evidence="1">Cell inner membrane</location>
        <topology evidence="1">Peripheral membrane protein</topology>
        <orientation evidence="1">Cytoplasmic side</orientation>
    </subcellularLocation>
</comment>
<comment type="similarity">
    <text evidence="1">Belongs to the TRAFAC class translation factor GTPase superfamily. Classic translation factor GTPase family. LepA subfamily.</text>
</comment>